<dbReference type="EMBL" id="AY008136">
    <property type="protein sequence ID" value="AAG32089.1"/>
    <property type="status" value="ALT_SEQ"/>
    <property type="molecule type" value="mRNA"/>
</dbReference>
<dbReference type="EMBL" id="BX284601">
    <property type="protein sequence ID" value="CCD61316.1"/>
    <property type="molecule type" value="Genomic_DNA"/>
</dbReference>
<dbReference type="PIR" id="C87790">
    <property type="entry name" value="C87790"/>
</dbReference>
<dbReference type="RefSeq" id="NP_001020965.1">
    <property type="nucleotide sequence ID" value="NM_001025794.1"/>
</dbReference>
<dbReference type="RefSeq" id="NP_001020966.2">
    <property type="nucleotide sequence ID" value="NM_001025795.3"/>
</dbReference>
<dbReference type="SMR" id="Q9BIG2"/>
<dbReference type="BioGRID" id="37723">
    <property type="interactions" value="1"/>
</dbReference>
<dbReference type="FunCoup" id="Q9BIG2">
    <property type="interactions" value="7"/>
</dbReference>
<dbReference type="IntAct" id="Q9BIG2">
    <property type="interactions" value="2"/>
</dbReference>
<dbReference type="STRING" id="6239.B0207.3b.1"/>
<dbReference type="PaxDb" id="6239-B0207.3b"/>
<dbReference type="EnsemblMetazoa" id="B0207.3.1">
    <property type="protein sequence ID" value="B0207.3.1"/>
    <property type="gene ID" value="WBGene00001676"/>
</dbReference>
<dbReference type="GeneID" id="172269"/>
<dbReference type="KEGG" id="cel:CELE_B0207.3"/>
<dbReference type="UCSC" id="B0207.3b">
    <property type="organism name" value="c. elegans"/>
</dbReference>
<dbReference type="AGR" id="WB:WBGene00001676"/>
<dbReference type="CTD" id="172269"/>
<dbReference type="WormBase" id="B0207.3">
    <property type="protein sequence ID" value="CE38990"/>
    <property type="gene ID" value="WBGene00001676"/>
    <property type="gene designation" value="gpa-14"/>
</dbReference>
<dbReference type="eggNOG" id="KOG0082">
    <property type="taxonomic scope" value="Eukaryota"/>
</dbReference>
<dbReference type="GeneTree" id="ENSGT00970000196059"/>
<dbReference type="HOGENOM" id="CLU_014184_2_1_1"/>
<dbReference type="InParanoid" id="Q9BIG2"/>
<dbReference type="OMA" id="CYQCMHG"/>
<dbReference type="OrthoDB" id="5783907at2759"/>
<dbReference type="PhylomeDB" id="Q9BIG2"/>
<dbReference type="PRO" id="PR:Q9BIG2"/>
<dbReference type="Proteomes" id="UP000001940">
    <property type="component" value="Chromosome I"/>
</dbReference>
<dbReference type="GO" id="GO:0005737">
    <property type="term" value="C:cytoplasm"/>
    <property type="evidence" value="ECO:0000318"/>
    <property type="project" value="GO_Central"/>
</dbReference>
<dbReference type="GO" id="GO:0005834">
    <property type="term" value="C:heterotrimeric G-protein complex"/>
    <property type="evidence" value="ECO:0000318"/>
    <property type="project" value="GO_Central"/>
</dbReference>
<dbReference type="GO" id="GO:0001664">
    <property type="term" value="F:G protein-coupled receptor binding"/>
    <property type="evidence" value="ECO:0000318"/>
    <property type="project" value="GO_Central"/>
</dbReference>
<dbReference type="GO" id="GO:0031683">
    <property type="term" value="F:G-protein beta/gamma-subunit complex binding"/>
    <property type="evidence" value="ECO:0000318"/>
    <property type="project" value="GO_Central"/>
</dbReference>
<dbReference type="GO" id="GO:0005525">
    <property type="term" value="F:GTP binding"/>
    <property type="evidence" value="ECO:0007669"/>
    <property type="project" value="UniProtKB-KW"/>
</dbReference>
<dbReference type="GO" id="GO:0003924">
    <property type="term" value="F:GTPase activity"/>
    <property type="evidence" value="ECO:0000318"/>
    <property type="project" value="GO_Central"/>
</dbReference>
<dbReference type="GO" id="GO:0046872">
    <property type="term" value="F:metal ion binding"/>
    <property type="evidence" value="ECO:0007669"/>
    <property type="project" value="UniProtKB-KW"/>
</dbReference>
<dbReference type="GO" id="GO:0007188">
    <property type="term" value="P:adenylate cyclase-modulating G protein-coupled receptor signaling pathway"/>
    <property type="evidence" value="ECO:0000318"/>
    <property type="project" value="GO_Central"/>
</dbReference>
<dbReference type="CDD" id="cd00066">
    <property type="entry name" value="G-alpha"/>
    <property type="match status" value="1"/>
</dbReference>
<dbReference type="FunFam" id="3.40.50.300:FF:000181">
    <property type="entry name" value="Guanine nucleotide-binding protein subunit alpha"/>
    <property type="match status" value="1"/>
</dbReference>
<dbReference type="Gene3D" id="1.10.400.10">
    <property type="entry name" value="GI Alpha 1, domain 2-like"/>
    <property type="match status" value="1"/>
</dbReference>
<dbReference type="Gene3D" id="3.40.50.300">
    <property type="entry name" value="P-loop containing nucleotide triphosphate hydrolases"/>
    <property type="match status" value="1"/>
</dbReference>
<dbReference type="InterPro" id="IPR001019">
    <property type="entry name" value="Gprotein_alpha_su"/>
</dbReference>
<dbReference type="InterPro" id="IPR011025">
    <property type="entry name" value="GproteinA_insert"/>
</dbReference>
<dbReference type="InterPro" id="IPR027417">
    <property type="entry name" value="P-loop_NTPase"/>
</dbReference>
<dbReference type="PANTHER" id="PTHR10218">
    <property type="entry name" value="GTP-BINDING PROTEIN ALPHA SUBUNIT"/>
    <property type="match status" value="1"/>
</dbReference>
<dbReference type="PANTHER" id="PTHR10218:SF208">
    <property type="entry name" value="GUANINE NUCLEOTIDE-BINDING PROTEIN ALPHA-14 SUBUNIT"/>
    <property type="match status" value="1"/>
</dbReference>
<dbReference type="Pfam" id="PF00503">
    <property type="entry name" value="G-alpha"/>
    <property type="match status" value="1"/>
</dbReference>
<dbReference type="PRINTS" id="PR00318">
    <property type="entry name" value="GPROTEINA"/>
</dbReference>
<dbReference type="SMART" id="SM00275">
    <property type="entry name" value="G_alpha"/>
    <property type="match status" value="1"/>
</dbReference>
<dbReference type="SUPFAM" id="SSF52540">
    <property type="entry name" value="P-loop containing nucleoside triphosphate hydrolases"/>
    <property type="match status" value="1"/>
</dbReference>
<dbReference type="SUPFAM" id="SSF47895">
    <property type="entry name" value="Transducin (alpha subunit), insertion domain"/>
    <property type="match status" value="1"/>
</dbReference>
<dbReference type="PROSITE" id="PS51882">
    <property type="entry name" value="G_ALPHA"/>
    <property type="match status" value="1"/>
</dbReference>
<feature type="chain" id="PRO_0000203653" description="Guanine nucleotide-binding protein alpha-14 subunit">
    <location>
        <begin position="1"/>
        <end position="408"/>
    </location>
</feature>
<feature type="domain" description="G-alpha" evidence="2">
    <location>
        <begin position="71"/>
        <end position="408"/>
    </location>
</feature>
<feature type="region of interest" description="G1 motif" evidence="2">
    <location>
        <begin position="74"/>
        <end position="87"/>
    </location>
</feature>
<feature type="region of interest" description="G2 motif" evidence="2">
    <location>
        <begin position="214"/>
        <end position="222"/>
    </location>
</feature>
<feature type="region of interest" description="G3 motif" evidence="2">
    <location>
        <begin position="237"/>
        <end position="246"/>
    </location>
</feature>
<feature type="region of interest" description="G4 motif" evidence="2">
    <location>
        <begin position="321"/>
        <end position="328"/>
    </location>
</feature>
<feature type="region of interest" description="G5 motif" evidence="2">
    <location>
        <begin position="378"/>
        <end position="383"/>
    </location>
</feature>
<feature type="binding site" evidence="1">
    <location>
        <begin position="39"/>
        <end position="46"/>
    </location>
    <ligand>
        <name>GTP</name>
        <dbReference type="ChEBI" id="CHEBI:37565"/>
    </ligand>
</feature>
<feature type="binding site" evidence="1">
    <location>
        <begin position="79"/>
        <end position="86"/>
    </location>
    <ligand>
        <name>GTP</name>
        <dbReference type="ChEBI" id="CHEBI:37565"/>
    </ligand>
</feature>
<feature type="binding site" evidence="1">
    <location>
        <position position="86"/>
    </location>
    <ligand>
        <name>Mg(2+)</name>
        <dbReference type="ChEBI" id="CHEBI:18420"/>
    </ligand>
</feature>
<feature type="binding site" evidence="1">
    <location>
        <begin position="201"/>
        <end position="205"/>
    </location>
    <ligand>
        <name>GTP</name>
        <dbReference type="ChEBI" id="CHEBI:37565"/>
    </ligand>
</feature>
<feature type="binding site" evidence="1">
    <location>
        <begin position="216"/>
        <end position="222"/>
    </location>
    <ligand>
        <name>GTP</name>
        <dbReference type="ChEBI" id="CHEBI:37565"/>
    </ligand>
</feature>
<feature type="binding site" evidence="1">
    <location>
        <position position="222"/>
    </location>
    <ligand>
        <name>Mg(2+)</name>
        <dbReference type="ChEBI" id="CHEBI:18420"/>
    </ligand>
</feature>
<feature type="binding site" evidence="1">
    <location>
        <begin position="241"/>
        <end position="245"/>
    </location>
    <ligand>
        <name>GTP</name>
        <dbReference type="ChEBI" id="CHEBI:37565"/>
    </ligand>
</feature>
<feature type="binding site" evidence="1">
    <location>
        <begin position="285"/>
        <end position="288"/>
    </location>
    <ligand>
        <name>GTP</name>
        <dbReference type="ChEBI" id="CHEBI:37565"/>
    </ligand>
</feature>
<feature type="binding site" evidence="1">
    <location>
        <begin position="325"/>
        <end position="328"/>
    </location>
    <ligand>
        <name>GTP</name>
        <dbReference type="ChEBI" id="CHEBI:37565"/>
    </ligand>
</feature>
<feature type="binding site" evidence="1">
    <location>
        <position position="380"/>
    </location>
    <ligand>
        <name>GTP</name>
        <dbReference type="ChEBI" id="CHEBI:37565"/>
    </ligand>
</feature>
<evidence type="ECO:0000250" key="1"/>
<evidence type="ECO:0000255" key="2">
    <source>
        <dbReference type="PROSITE-ProRule" id="PRU01230"/>
    </source>
</evidence>
<evidence type="ECO:0000269" key="3">
    <source>
    </source>
</evidence>
<evidence type="ECO:0000269" key="4">
    <source>
    </source>
</evidence>
<evidence type="ECO:0000305" key="5"/>
<evidence type="ECO:0000312" key="6">
    <source>
        <dbReference type="WormBase" id="B0207.3"/>
    </source>
</evidence>
<proteinExistence type="evidence at protein level"/>
<keyword id="KW-0342">GTP-binding</keyword>
<keyword id="KW-0460">Magnesium</keyword>
<keyword id="KW-0479">Metal-binding</keyword>
<keyword id="KW-0547">Nucleotide-binding</keyword>
<keyword id="KW-1185">Reference proteome</keyword>
<keyword id="KW-0807">Transducer</keyword>
<name>GPA14_CAEEL</name>
<comment type="function">
    <text evidence="4">Guanine nucleotide-binding proteins (G proteins) are involved as modulators or transducers in various transmembrane signaling systems. In association with the G-protein coupled dopamine receptor dop-2, modulates two types of learning: touch habituation and chemosensory associative conditioning (PubMed:23607404).</text>
</comment>
<comment type="subunit">
    <text evidence="3">G proteins are composed of 3 units; alpha, beta and gamma. The alpha chain contains the guanine nucleotide binding site. Interacts with the dopamine receptor dop-2 (via C-terminus); the interaction is direct (PubMed:22280843).</text>
</comment>
<comment type="interaction">
    <interactant intactId="EBI-2923711">
        <id>Q9BIG2</id>
    </interactant>
    <interactant intactId="EBI-6082999">
        <id>E7EM37</id>
        <label>dop-2</label>
    </interactant>
    <organismsDiffer>false</organismsDiffer>
    <experiments>4</experiments>
</comment>
<comment type="similarity">
    <text evidence="5">Belongs to the G-alpha family.</text>
</comment>
<comment type="sequence caution" evidence="5">
    <conflict type="miscellaneous discrepancy">
        <sequence resource="EMBL-CDS" id="AAG32089"/>
    </conflict>
</comment>
<reference key="1">
    <citation type="submission" date="2000-09" db="EMBL/GenBank/DDBJ databases">
        <title>Interaction analysis of the complete G-alpha subfamily of heterotrimeric G proteins from Caenorhabditis elegans.</title>
        <authorList>
            <person name="Cuppen E."/>
            <person name="Jansen G."/>
            <person name="Plasterk R.H.A."/>
        </authorList>
    </citation>
    <scope>NUCLEOTIDE SEQUENCE [MRNA]</scope>
    <source>
        <strain>Bristol N2</strain>
    </source>
</reference>
<reference key="2">
    <citation type="journal article" date="1998" name="Science">
        <title>Genome sequence of the nematode C. elegans: a platform for investigating biology.</title>
        <authorList>
            <consortium name="The C. elegans sequencing consortium"/>
        </authorList>
    </citation>
    <scope>NUCLEOTIDE SEQUENCE [LARGE SCALE GENOMIC DNA]</scope>
    <source>
        <strain>Bristol N2</strain>
    </source>
</reference>
<reference key="3">
    <citation type="journal article" date="1999" name="Nat. Genet.">
        <title>The complete family of genes encoding G proteins of Caenorhabditis elegans.</title>
        <authorList>
            <person name="Jansen G."/>
            <person name="Thijssen K.L."/>
            <person name="Werner P."/>
            <person name="van der Horst M."/>
            <person name="Hazendonk E."/>
            <person name="Plasterk R.H.A."/>
        </authorList>
    </citation>
    <scope>GENE FAMILY</scope>
    <scope>NOMENCLATURE</scope>
</reference>
<reference key="4">
    <citation type="journal article" date="2012" name="J. Mol. Signal.">
        <title>The Caenorhabditis elegans D2-like dopamine receptor DOP-2 physically interacts with GPA-14, a Galphai subunit.</title>
        <authorList>
            <person name="Pandey P."/>
            <person name="Harbinder S."/>
        </authorList>
    </citation>
    <scope>INTERACTION WITH DOP-2</scope>
</reference>
<reference key="5">
    <citation type="journal article" date="2013" name="Behav. Brain Funct.">
        <title>GPA-14, a Galpha(i) subunit mediates dopaminergic behavioral plasticity in C. elegans.</title>
        <authorList>
            <person name="Mersha M."/>
            <person name="Formisano R."/>
            <person name="McDonald R."/>
            <person name="Pandey P."/>
            <person name="Tavernarakis N."/>
            <person name="Harbinder S."/>
        </authorList>
    </citation>
    <scope>FUNCTION</scope>
</reference>
<gene>
    <name evidence="6" type="primary">gpa-14</name>
    <name evidence="6" type="ORF">B0207.3</name>
</gene>
<organism>
    <name type="scientific">Caenorhabditis elegans</name>
    <dbReference type="NCBI Taxonomy" id="6239"/>
    <lineage>
        <taxon>Eukaryota</taxon>
        <taxon>Metazoa</taxon>
        <taxon>Ecdysozoa</taxon>
        <taxon>Nematoda</taxon>
        <taxon>Chromadorea</taxon>
        <taxon>Rhabditida</taxon>
        <taxon>Rhabditina</taxon>
        <taxon>Rhabditomorpha</taxon>
        <taxon>Rhabditoidea</taxon>
        <taxon>Rhabditidae</taxon>
        <taxon>Peloderinae</taxon>
        <taxon>Caenorhabditis</taxon>
    </lineage>
</organism>
<sequence length="408" mass="46734">MAFSCFDKFSYTYCYQCMHGPDGCMVPSRNGEGTELYAHSEELEAKLRELARRGHMEIEKELALEKKTYGSHIKILILGGPLSGKSTIFKQMQIIHVDGFKTDQELIQYRGLIDNNIRDIYLQLIAGSRVVGIPLDPIEHITYEIDEIYAPMSDAFSVRTISELLEPLTEFWNSKQIQEIYKRRCEFELLDSTKYYLENLTRIADPTYLPNQEDIVHSRKATMSINSIVFEYTGVSLLMIDVGGQRSERKKWLHLFDDAKVVLFVIDLTGYAKRSEESRMELSRFPKFFRDVGSNAYDMKVALKIFNEVAAASALANAVFLLFFNKVDLFKEILSQVNLQPCFSKFDGENTYEETSKYICEKFIRAASSKKSVFPHFTTATNTENVKLVFRACMESVFKANAKATGLS</sequence>
<accession>Q9BIG2</accession>
<accession>O01428</accession>
<accession>Q7Z117</accession>
<protein>
    <recommendedName>
        <fullName>Guanine nucleotide-binding protein alpha-14 subunit</fullName>
    </recommendedName>
</protein>